<feature type="chain" id="PRO_0000153520" description="Aromatic amino acid aminotransferase">
    <location>
        <begin position="1"/>
        <end position="359"/>
    </location>
</feature>
<feature type="modified residue" description="N6-(pyridoxal phosphate)lysine" evidence="1">
    <location>
        <position position="223"/>
    </location>
</feature>
<accession>Q82FJ1</accession>
<gene>
    <name evidence="1" type="primary">pat</name>
    <name type="synonym">hisC2</name>
    <name type="ordered locus">SAV_4261</name>
</gene>
<protein>
    <recommendedName>
        <fullName evidence="1">Aromatic amino acid aminotransferase</fullName>
        <shortName evidence="1">ArAT</shortName>
        <ecNumber evidence="1">2.6.1.57</ecNumber>
    </recommendedName>
</protein>
<comment type="function">
    <text evidence="1">Aminotransferase that catalyzes the conversion of aromatic amino acids and 2-oxoglutarate into corresponding aromatic oxo acids and L-glutamate.</text>
</comment>
<comment type="catalytic activity">
    <reaction evidence="1">
        <text>an aromatic L-alpha-amino acid + 2-oxoglutarate = an aromatic oxo-acid + L-glutamate</text>
        <dbReference type="Rhea" id="RHEA:17533"/>
        <dbReference type="ChEBI" id="CHEBI:16810"/>
        <dbReference type="ChEBI" id="CHEBI:29985"/>
        <dbReference type="ChEBI" id="CHEBI:73309"/>
        <dbReference type="ChEBI" id="CHEBI:84824"/>
        <dbReference type="EC" id="2.6.1.57"/>
    </reaction>
</comment>
<comment type="cofactor">
    <cofactor evidence="1">
        <name>pyridoxal 5'-phosphate</name>
        <dbReference type="ChEBI" id="CHEBI:597326"/>
    </cofactor>
</comment>
<comment type="subunit">
    <text evidence="1">Homodimer.</text>
</comment>
<comment type="similarity">
    <text evidence="1">Belongs to the class-II pyridoxal-phosphate-dependent aminotransferase family.</text>
</comment>
<keyword id="KW-0032">Aminotransferase</keyword>
<keyword id="KW-0663">Pyridoxal phosphate</keyword>
<keyword id="KW-1185">Reference proteome</keyword>
<keyword id="KW-0808">Transferase</keyword>
<dbReference type="EC" id="2.6.1.57" evidence="1"/>
<dbReference type="EMBL" id="BA000030">
    <property type="protein sequence ID" value="BAC71973.1"/>
    <property type="molecule type" value="Genomic_DNA"/>
</dbReference>
<dbReference type="SMR" id="Q82FJ1"/>
<dbReference type="GeneID" id="41541343"/>
<dbReference type="KEGG" id="sma:SAVERM_4261"/>
<dbReference type="eggNOG" id="COG0079">
    <property type="taxonomic scope" value="Bacteria"/>
</dbReference>
<dbReference type="HOGENOM" id="CLU_017584_3_3_11"/>
<dbReference type="OrthoDB" id="9809616at2"/>
<dbReference type="Proteomes" id="UP000000428">
    <property type="component" value="Chromosome"/>
</dbReference>
<dbReference type="GO" id="GO:0008793">
    <property type="term" value="F:aromatic-amino-acid transaminase activity"/>
    <property type="evidence" value="ECO:0007669"/>
    <property type="project" value="UniProtKB-UniRule"/>
</dbReference>
<dbReference type="GO" id="GO:0004400">
    <property type="term" value="F:histidinol-phosphate transaminase activity"/>
    <property type="evidence" value="ECO:0007669"/>
    <property type="project" value="InterPro"/>
</dbReference>
<dbReference type="GO" id="GO:0030170">
    <property type="term" value="F:pyridoxal phosphate binding"/>
    <property type="evidence" value="ECO:0007669"/>
    <property type="project" value="UniProtKB-UniRule"/>
</dbReference>
<dbReference type="GO" id="GO:0000105">
    <property type="term" value="P:L-histidine biosynthetic process"/>
    <property type="evidence" value="ECO:0007669"/>
    <property type="project" value="InterPro"/>
</dbReference>
<dbReference type="CDD" id="cd00609">
    <property type="entry name" value="AAT_like"/>
    <property type="match status" value="1"/>
</dbReference>
<dbReference type="Gene3D" id="3.90.1150.10">
    <property type="entry name" value="Aspartate Aminotransferase, domain 1"/>
    <property type="match status" value="1"/>
</dbReference>
<dbReference type="Gene3D" id="3.40.640.10">
    <property type="entry name" value="Type I PLP-dependent aspartate aminotransferase-like (Major domain)"/>
    <property type="match status" value="1"/>
</dbReference>
<dbReference type="HAMAP" id="MF_01023">
    <property type="entry name" value="HisC_aminotrans_2"/>
    <property type="match status" value="1"/>
</dbReference>
<dbReference type="HAMAP" id="MF_01513">
    <property type="entry name" value="Phe_aminotrans_2"/>
    <property type="match status" value="1"/>
</dbReference>
<dbReference type="InterPro" id="IPR001917">
    <property type="entry name" value="Aminotrans_II_pyridoxalP_BS"/>
</dbReference>
<dbReference type="InterPro" id="IPR004839">
    <property type="entry name" value="Aminotransferase_I/II_large"/>
</dbReference>
<dbReference type="InterPro" id="IPR024892">
    <property type="entry name" value="ArAT"/>
</dbReference>
<dbReference type="InterPro" id="IPR005861">
    <property type="entry name" value="HisP_aminotrans"/>
</dbReference>
<dbReference type="InterPro" id="IPR050106">
    <property type="entry name" value="HistidinolP_aminotransfase"/>
</dbReference>
<dbReference type="InterPro" id="IPR015424">
    <property type="entry name" value="PyrdxlP-dep_Trfase"/>
</dbReference>
<dbReference type="InterPro" id="IPR015421">
    <property type="entry name" value="PyrdxlP-dep_Trfase_major"/>
</dbReference>
<dbReference type="InterPro" id="IPR015422">
    <property type="entry name" value="PyrdxlP-dep_Trfase_small"/>
</dbReference>
<dbReference type="NCBIfam" id="TIGR01141">
    <property type="entry name" value="hisC"/>
    <property type="match status" value="1"/>
</dbReference>
<dbReference type="NCBIfam" id="NF002878">
    <property type="entry name" value="PRK03321.1"/>
    <property type="match status" value="1"/>
</dbReference>
<dbReference type="PANTHER" id="PTHR43643:SF3">
    <property type="entry name" value="HISTIDINOL-PHOSPHATE AMINOTRANSFERASE"/>
    <property type="match status" value="1"/>
</dbReference>
<dbReference type="PANTHER" id="PTHR43643">
    <property type="entry name" value="HISTIDINOL-PHOSPHATE AMINOTRANSFERASE 2"/>
    <property type="match status" value="1"/>
</dbReference>
<dbReference type="Pfam" id="PF00155">
    <property type="entry name" value="Aminotran_1_2"/>
    <property type="match status" value="1"/>
</dbReference>
<dbReference type="SUPFAM" id="SSF53383">
    <property type="entry name" value="PLP-dependent transferases"/>
    <property type="match status" value="1"/>
</dbReference>
<dbReference type="PROSITE" id="PS00599">
    <property type="entry name" value="AA_TRANSFER_CLASS_2"/>
    <property type="match status" value="1"/>
</dbReference>
<reference key="1">
    <citation type="journal article" date="2001" name="Proc. Natl. Acad. Sci. U.S.A.">
        <title>Genome sequence of an industrial microorganism Streptomyces avermitilis: deducing the ability of producing secondary metabolites.</title>
        <authorList>
            <person name="Omura S."/>
            <person name="Ikeda H."/>
            <person name="Ishikawa J."/>
            <person name="Hanamoto A."/>
            <person name="Takahashi C."/>
            <person name="Shinose M."/>
            <person name="Takahashi Y."/>
            <person name="Horikawa H."/>
            <person name="Nakazawa H."/>
            <person name="Osonoe T."/>
            <person name="Kikuchi H."/>
            <person name="Shiba T."/>
            <person name="Sakaki Y."/>
            <person name="Hattori M."/>
        </authorList>
    </citation>
    <scope>NUCLEOTIDE SEQUENCE [LARGE SCALE GENOMIC DNA]</scope>
    <source>
        <strain>ATCC 31267 / DSM 46492 / JCM 5070 / NBRC 14893 / NCIMB 12804 / NRRL 8165 / MA-4680</strain>
    </source>
</reference>
<reference key="2">
    <citation type="journal article" date="2003" name="Nat. Biotechnol.">
        <title>Complete genome sequence and comparative analysis of the industrial microorganism Streptomyces avermitilis.</title>
        <authorList>
            <person name="Ikeda H."/>
            <person name="Ishikawa J."/>
            <person name="Hanamoto A."/>
            <person name="Shinose M."/>
            <person name="Kikuchi H."/>
            <person name="Shiba T."/>
            <person name="Sakaki Y."/>
            <person name="Hattori M."/>
            <person name="Omura S."/>
        </authorList>
    </citation>
    <scope>NUCLEOTIDE SEQUENCE [LARGE SCALE GENOMIC DNA]</scope>
    <source>
        <strain>ATCC 31267 / DSM 46492 / JCM 5070 / NBRC 14893 / NCIMB 12804 / NRRL 8165 / MA-4680</strain>
    </source>
</reference>
<evidence type="ECO:0000255" key="1">
    <source>
        <dbReference type="HAMAP-Rule" id="MF_01513"/>
    </source>
</evidence>
<proteinExistence type="inferred from homology"/>
<sequence>MSETSPKLRAELEGIPTYKPGKPAAAAGPVAYKLSSNENPYPPLPGVLESVASSVGSFNRYPDMACSGLMSELSERFGVPLSHLATGTGSVGVAQQLLQATSGPGDEVIYAWRSFEAYPIITQVSGATSVQVPLTPGDVHDLDAMADAITDRTRLIFVCNPNNPTGTVVRRAELERFLDRVPSDVLVVLDEAYREFIRDPEVPDGVAIYRERPNVCVLRTFSKAYGLAGLRVGFAIAHEPVAAALRKTAVPFGVSQLAQDAAVASLRAEDELLGRVGALVCERQRVVASLREQGWTVPETQANFVWLRLGERTLDFAAACEQAGVVVRPFAGEGVRVTVGENEANDIFLKVTERFRKEL</sequence>
<organism>
    <name type="scientific">Streptomyces avermitilis (strain ATCC 31267 / DSM 46492 / JCM 5070 / NBRC 14893 / NCIMB 12804 / NRRL 8165 / MA-4680)</name>
    <dbReference type="NCBI Taxonomy" id="227882"/>
    <lineage>
        <taxon>Bacteria</taxon>
        <taxon>Bacillati</taxon>
        <taxon>Actinomycetota</taxon>
        <taxon>Actinomycetes</taxon>
        <taxon>Kitasatosporales</taxon>
        <taxon>Streptomycetaceae</taxon>
        <taxon>Streptomyces</taxon>
    </lineage>
</organism>
<name>PATR_STRAW</name>